<dbReference type="EC" id="3.2.1.2"/>
<dbReference type="EMBL" id="AP001297">
    <property type="protein sequence ID" value="BAB03009.1"/>
    <property type="molecule type" value="Genomic_DNA"/>
</dbReference>
<dbReference type="EMBL" id="CP002686">
    <property type="protein sequence ID" value="AEE76832.1"/>
    <property type="molecule type" value="Genomic_DNA"/>
</dbReference>
<dbReference type="EMBL" id="AF367293">
    <property type="protein sequence ID" value="AAK56281.1"/>
    <property type="molecule type" value="mRNA"/>
</dbReference>
<dbReference type="EMBL" id="AY074393">
    <property type="protein sequence ID" value="AAL67089.1"/>
    <property type="molecule type" value="mRNA"/>
</dbReference>
<dbReference type="EMBL" id="AY078046">
    <property type="protein sequence ID" value="AAL77747.1"/>
    <property type="molecule type" value="mRNA"/>
</dbReference>
<dbReference type="EMBL" id="AY096517">
    <property type="protein sequence ID" value="AAM20167.1"/>
    <property type="molecule type" value="mRNA"/>
</dbReference>
<dbReference type="EMBL" id="AK226274">
    <property type="protein sequence ID" value="BAE98433.1"/>
    <property type="molecule type" value="mRNA"/>
</dbReference>
<dbReference type="RefSeq" id="NP_189034.1">
    <property type="nucleotide sequence ID" value="NM_113297.3"/>
</dbReference>
<dbReference type="PDB" id="8J5D">
    <property type="method" value="EM"/>
    <property type="resolution" value="3.00 A"/>
    <property type="chains" value="A=105-575"/>
</dbReference>
<dbReference type="PDBsum" id="8J5D"/>
<dbReference type="EMDB" id="EMD-35985"/>
<dbReference type="SASBDB" id="Q9LIR6"/>
<dbReference type="SMR" id="Q9LIR6"/>
<dbReference type="FunCoup" id="Q9LIR6">
    <property type="interactions" value="393"/>
</dbReference>
<dbReference type="STRING" id="3702.Q9LIR6"/>
<dbReference type="CAZy" id="GH14">
    <property type="family name" value="Glycoside Hydrolase Family 14"/>
</dbReference>
<dbReference type="GlyGen" id="Q9LIR6">
    <property type="glycosylation" value="1 site"/>
</dbReference>
<dbReference type="iPTMnet" id="Q9LIR6"/>
<dbReference type="PaxDb" id="3702-AT3G23920.1"/>
<dbReference type="ProteomicsDB" id="240813"/>
<dbReference type="EnsemblPlants" id="AT3G23920.1">
    <property type="protein sequence ID" value="AT3G23920.1"/>
    <property type="gene ID" value="AT3G23920"/>
</dbReference>
<dbReference type="GeneID" id="821975"/>
<dbReference type="Gramene" id="AT3G23920.1">
    <property type="protein sequence ID" value="AT3G23920.1"/>
    <property type="gene ID" value="AT3G23920"/>
</dbReference>
<dbReference type="KEGG" id="ath:AT3G23920"/>
<dbReference type="Araport" id="AT3G23920"/>
<dbReference type="TAIR" id="AT3G23920">
    <property type="gene designation" value="BAM1"/>
</dbReference>
<dbReference type="eggNOG" id="ENOG502QTBX">
    <property type="taxonomic scope" value="Eukaryota"/>
</dbReference>
<dbReference type="HOGENOM" id="CLU_016754_1_1_1"/>
<dbReference type="InParanoid" id="Q9LIR6"/>
<dbReference type="OMA" id="SMTHQIG"/>
<dbReference type="PhylomeDB" id="Q9LIR6"/>
<dbReference type="BioCyc" id="MetaCyc:AT3G23920-MONOMER"/>
<dbReference type="BRENDA" id="3.2.1.2">
    <property type="organism ID" value="399"/>
</dbReference>
<dbReference type="PRO" id="PR:Q9LIR6"/>
<dbReference type="Proteomes" id="UP000006548">
    <property type="component" value="Chromosome 3"/>
</dbReference>
<dbReference type="ExpressionAtlas" id="Q9LIR6">
    <property type="expression patterns" value="baseline and differential"/>
</dbReference>
<dbReference type="GO" id="GO:0009507">
    <property type="term" value="C:chloroplast"/>
    <property type="evidence" value="ECO:0007669"/>
    <property type="project" value="UniProtKB-SubCell"/>
</dbReference>
<dbReference type="GO" id="GO:0016161">
    <property type="term" value="F:beta-amylase activity"/>
    <property type="evidence" value="ECO:0000314"/>
    <property type="project" value="TAIR"/>
</dbReference>
<dbReference type="GO" id="GO:0009414">
    <property type="term" value="P:response to water deprivation"/>
    <property type="evidence" value="ECO:0000270"/>
    <property type="project" value="TAIR"/>
</dbReference>
<dbReference type="GO" id="GO:0005983">
    <property type="term" value="P:starch catabolic process"/>
    <property type="evidence" value="ECO:0000314"/>
    <property type="project" value="TAIR"/>
</dbReference>
<dbReference type="FunFam" id="3.20.20.80:FF:000066">
    <property type="entry name" value="Beta-amylase"/>
    <property type="match status" value="1"/>
</dbReference>
<dbReference type="Gene3D" id="3.20.20.80">
    <property type="entry name" value="Glycosidases"/>
    <property type="match status" value="1"/>
</dbReference>
<dbReference type="InterPro" id="IPR001554">
    <property type="entry name" value="Glyco_hydro_14"/>
</dbReference>
<dbReference type="InterPro" id="IPR018238">
    <property type="entry name" value="Glyco_hydro_14_CS"/>
</dbReference>
<dbReference type="InterPro" id="IPR001371">
    <property type="entry name" value="Glyco_hydro_14B_pln"/>
</dbReference>
<dbReference type="InterPro" id="IPR017853">
    <property type="entry name" value="Glycoside_hydrolase_SF"/>
</dbReference>
<dbReference type="PANTHER" id="PTHR31352">
    <property type="entry name" value="BETA-AMYLASE 1, CHLOROPLASTIC"/>
    <property type="match status" value="1"/>
</dbReference>
<dbReference type="PANTHER" id="PTHR31352:SF31">
    <property type="entry name" value="BETA-AMYLASE 1, CHLOROPLASTIC"/>
    <property type="match status" value="1"/>
</dbReference>
<dbReference type="Pfam" id="PF01373">
    <property type="entry name" value="Glyco_hydro_14"/>
    <property type="match status" value="1"/>
</dbReference>
<dbReference type="PRINTS" id="PR00750">
    <property type="entry name" value="BETAAMYLASE"/>
</dbReference>
<dbReference type="PRINTS" id="PR00842">
    <property type="entry name" value="GLHYDLASE14B"/>
</dbReference>
<dbReference type="SUPFAM" id="SSF51445">
    <property type="entry name" value="(Trans)glycosidases"/>
    <property type="match status" value="1"/>
</dbReference>
<dbReference type="PROSITE" id="PS00506">
    <property type="entry name" value="BETA_AMYLASE_1"/>
    <property type="match status" value="1"/>
</dbReference>
<dbReference type="PROSITE" id="PS00679">
    <property type="entry name" value="BETA_AMYLASE_2"/>
    <property type="match status" value="1"/>
</dbReference>
<keyword id="KW-0002">3D-structure</keyword>
<keyword id="KW-0119">Carbohydrate metabolism</keyword>
<keyword id="KW-0150">Chloroplast</keyword>
<keyword id="KW-1015">Disulfide bond</keyword>
<keyword id="KW-0326">Glycosidase</keyword>
<keyword id="KW-0378">Hydrolase</keyword>
<keyword id="KW-0597">Phosphoprotein</keyword>
<keyword id="KW-0934">Plastid</keyword>
<keyword id="KW-0624">Polysaccharide degradation</keyword>
<keyword id="KW-1185">Reference proteome</keyword>
<keyword id="KW-0809">Transit peptide</keyword>
<name>BAM1_ARATH</name>
<gene>
    <name type="primary">BAM1</name>
    <name type="synonym">BMY7</name>
    <name type="synonym">TRBAMY</name>
    <name type="ordered locus">At3g23920</name>
    <name type="ORF">F14O13.12</name>
</gene>
<organism>
    <name type="scientific">Arabidopsis thaliana</name>
    <name type="common">Mouse-ear cress</name>
    <dbReference type="NCBI Taxonomy" id="3702"/>
    <lineage>
        <taxon>Eukaryota</taxon>
        <taxon>Viridiplantae</taxon>
        <taxon>Streptophyta</taxon>
        <taxon>Embryophyta</taxon>
        <taxon>Tracheophyta</taxon>
        <taxon>Spermatophyta</taxon>
        <taxon>Magnoliopsida</taxon>
        <taxon>eudicotyledons</taxon>
        <taxon>Gunneridae</taxon>
        <taxon>Pentapetalae</taxon>
        <taxon>rosids</taxon>
        <taxon>malvids</taxon>
        <taxon>Brassicales</taxon>
        <taxon>Brassicaceae</taxon>
        <taxon>Camelineae</taxon>
        <taxon>Arabidopsis</taxon>
    </lineage>
</organism>
<comment type="function">
    <text evidence="4 5 6">Beta-amylase activity. Can use p-nitrophenyl maltopentaoside (PNPG5) as substrate only in reduced form. Can play a minor role in the starch degradation and maltose metabolism in chloroplasts during the night. More active on phosphorylated glucan. Interacts directly with starch or other alpha-1,4-glucan.</text>
</comment>
<comment type="catalytic activity">
    <reaction>
        <text>Hydrolysis of (1-&gt;4)-alpha-D-glucosidic linkages in polysaccharides so as to remove successive maltose units from the non-reducing ends of the chains.</text>
        <dbReference type="EC" id="3.2.1.2"/>
    </reaction>
</comment>
<comment type="activity regulation">
    <text evidence="3">Redox regulation; active in reducing conditions, inactive in oxidizing conditions. Thioredoxins f1, m1, and y1 mediate the reversible reductive activation of oxidized BAM1.</text>
</comment>
<comment type="biophysicochemical properties">
    <phDependence>
        <text evidence="3 5 6">Optimum pH is 6-8.</text>
    </phDependence>
</comment>
<comment type="subcellular location">
    <subcellularLocation>
        <location evidence="3 5">Plastid</location>
        <location evidence="3 5">Chloroplast</location>
    </subcellularLocation>
</comment>
<comment type="tissue specificity">
    <text evidence="3">Expressed in leaves, roots, flowers, pollen, and seeds.</text>
</comment>
<comment type="disruption phenotype">
    <text evidence="5">Normal growth rate and starch breakdown in leaves during the night.</text>
</comment>
<comment type="similarity">
    <text evidence="7">Belongs to the glycosyl hydrolase 14 family.</text>
</comment>
<feature type="transit peptide" description="Chloroplast" evidence="3">
    <location>
        <begin position="1"/>
        <end position="41"/>
    </location>
</feature>
<feature type="chain" id="PRO_0000393416" description="Beta-amylase 1, chloroplastic">
    <location>
        <begin position="42"/>
        <end position="575"/>
    </location>
</feature>
<feature type="active site" description="Proton donor" evidence="2">
    <location>
        <position position="279"/>
    </location>
</feature>
<feature type="active site" description="Proton acceptor" evidence="2">
    <location>
        <position position="477"/>
    </location>
</feature>
<feature type="binding site" evidence="1">
    <location>
        <position position="147"/>
    </location>
    <ligand>
        <name>substrate</name>
    </ligand>
</feature>
<feature type="binding site" evidence="1">
    <location>
        <position position="187"/>
    </location>
    <ligand>
        <name>substrate</name>
    </ligand>
</feature>
<feature type="binding site" evidence="1">
    <location>
        <position position="195"/>
    </location>
    <ligand>
        <name>substrate</name>
    </ligand>
</feature>
<feature type="binding site" evidence="1">
    <location>
        <position position="392"/>
    </location>
    <ligand>
        <name>substrate</name>
    </ligand>
</feature>
<feature type="binding site" evidence="1">
    <location>
        <position position="397"/>
    </location>
    <ligand>
        <name>substrate</name>
    </ligand>
</feature>
<feature type="binding site" evidence="1">
    <location>
        <position position="439"/>
    </location>
    <ligand>
        <name>substrate</name>
    </ligand>
</feature>
<feature type="binding site" evidence="1">
    <location>
        <begin position="478"/>
        <end position="479"/>
    </location>
    <ligand>
        <name>substrate</name>
    </ligand>
</feature>
<feature type="binding site" evidence="1">
    <location>
        <position position="517"/>
    </location>
    <ligand>
        <name>substrate</name>
    </ligand>
</feature>
<feature type="modified residue" description="Phosphoserine" evidence="8">
    <location>
        <position position="55"/>
    </location>
</feature>
<feature type="modified residue" description="Phosphoserine" evidence="8">
    <location>
        <position position="59"/>
    </location>
</feature>
<feature type="disulfide bond" description="Inhibitory under oxidizing conditions" evidence="3">
    <location>
        <begin position="73"/>
        <end position="511"/>
    </location>
</feature>
<feature type="mutagenesis site" description="Impaired redox inactivation under oxidizing conditions." evidence="3">
    <original>C</original>
    <variation>S</variation>
    <location>
        <position position="73"/>
    </location>
</feature>
<feature type="mutagenesis site" description="Normal redox inactivation under oxidizing conditions." evidence="3">
    <original>C</original>
    <variation>S</variation>
    <location>
        <position position="189"/>
    </location>
</feature>
<feature type="mutagenesis site" description="Normal redox inactivation under oxidizing conditions." evidence="3">
    <original>C</original>
    <variation>S</variation>
    <location>
        <position position="247"/>
    </location>
</feature>
<feature type="mutagenesis site" description="Normal redox inactivation under oxidizing conditions." evidence="3">
    <original>C</original>
    <variation>S</variation>
    <location>
        <position position="302"/>
    </location>
</feature>
<feature type="mutagenesis site" description="Normal redox inactivation under oxidizing conditions." evidence="3">
    <original>C</original>
    <variation>S</variation>
    <location>
        <position position="440"/>
    </location>
</feature>
<feature type="mutagenesis site" description="Normal redox inactivation under oxidizing conditions." evidence="3">
    <original>C</original>
    <variation>S</variation>
    <location>
        <position position="454"/>
    </location>
</feature>
<feature type="mutagenesis site" description="Impaired redox inactivation under oxidizing conditions." evidence="3">
    <original>C</original>
    <variation>S</variation>
    <location>
        <position position="511"/>
    </location>
</feature>
<feature type="mutagenesis site" description="Normal redox enzyme activation under oxidizing conditions." evidence="3">
    <original>C</original>
    <variation>S</variation>
    <location>
        <position position="547"/>
    </location>
</feature>
<feature type="sequence conflict" description="In Ref. 4; BAE98433." evidence="7" ref="4">
    <original>H</original>
    <variation>N</variation>
    <location>
        <position position="405"/>
    </location>
</feature>
<accession>Q9LIR6</accession>
<accession>Q0WWR5</accession>
<proteinExistence type="evidence at protein level"/>
<evidence type="ECO:0000250" key="1"/>
<evidence type="ECO:0000255" key="2">
    <source>
        <dbReference type="PROSITE-ProRule" id="PRU10050"/>
    </source>
</evidence>
<evidence type="ECO:0000269" key="3">
    <source>
    </source>
</evidence>
<evidence type="ECO:0000269" key="4">
    <source>
    </source>
</evidence>
<evidence type="ECO:0000269" key="5">
    <source>
    </source>
</evidence>
<evidence type="ECO:0000269" key="6">
    <source>
    </source>
</evidence>
<evidence type="ECO:0000305" key="7"/>
<evidence type="ECO:0007744" key="8">
    <source>
    </source>
</evidence>
<protein>
    <recommendedName>
        <fullName>Beta-amylase 1, chloroplastic</fullName>
        <ecNumber>3.2.1.2</ecNumber>
    </recommendedName>
    <alternativeName>
        <fullName>1,4-alpha-D-glucan maltohydrolase</fullName>
    </alternativeName>
    <alternativeName>
        <fullName>Beta-amylase 7</fullName>
    </alternativeName>
    <alternativeName>
        <fullName>Thioredoxin-regulated beta-amylase</fullName>
        <shortName>TR-BAMY</shortName>
    </alternativeName>
</protein>
<sequence length="575" mass="63762">MALNLSHQLGVLAGTPIKSGEMTDSSLLSISPPSARMMTPKAMNRNYKAHGTDPSPPMSPILGATRADLSVACKAFAVENGIGTIEEQRTYREGGIGGKKEGGGGVPVFVMMPLDSVTMGNTVNRRKAMKASLQALKSAGVEGIMIDVWWGLVEKESPGTYNWGGYNELLELAKKLGLKVQAVMSFHQCGGNVGDSVTIPLPQWVVEEVDKDPDLAYTDQWGRRNHEYISLGADTLPVLKGRTPVQCYADFMRAFRDNFKHLLGETIVEIQVGMGPAGELRYPSYPEQEGTWKFPGIGAFQCYDKYSLSSLKAAAETYGKPEWGSTGPTDAGHYNNWPEDTQFFKKEGGGWNSEYGDFFLSWYSQMLLDHGERILSSAKSIFENMGVKISVKIAGIHWHYGTRSHAPELTAGYYNTRFRDGYLPIAQMLARHNAIFNFTCIEMRDHEQPQDALCAPEKLVNQVALATLAAEVPLAGENALPRYDDYAHEQILKASALNLDQNNEGEPREMCAFTYLRMNPELFQADNWGKFVAFVKKMGEGRDSHRCREEVEREAEHFVHVTQPLVQEAAVALTH</sequence>
<reference key="1">
    <citation type="journal article" date="2000" name="DNA Res.">
        <title>Structural analysis of Arabidopsis thaliana chromosome 3. II. Sequence features of the 4,251,695 bp regions covered by 90 P1, TAC and BAC clones.</title>
        <authorList>
            <person name="Kaneko T."/>
            <person name="Katoh T."/>
            <person name="Sato S."/>
            <person name="Nakamura Y."/>
            <person name="Asamizu E."/>
            <person name="Tabata S."/>
        </authorList>
    </citation>
    <scope>NUCLEOTIDE SEQUENCE [LARGE SCALE GENOMIC DNA]</scope>
    <source>
        <strain>cv. Columbia</strain>
    </source>
</reference>
<reference key="2">
    <citation type="journal article" date="2017" name="Plant J.">
        <title>Araport11: a complete reannotation of the Arabidopsis thaliana reference genome.</title>
        <authorList>
            <person name="Cheng C.Y."/>
            <person name="Krishnakumar V."/>
            <person name="Chan A.P."/>
            <person name="Thibaud-Nissen F."/>
            <person name="Schobel S."/>
            <person name="Town C.D."/>
        </authorList>
    </citation>
    <scope>GENOME REANNOTATION</scope>
    <source>
        <strain>cv. Columbia</strain>
    </source>
</reference>
<reference key="3">
    <citation type="journal article" date="2003" name="Science">
        <title>Empirical analysis of transcriptional activity in the Arabidopsis genome.</title>
        <authorList>
            <person name="Yamada K."/>
            <person name="Lim J."/>
            <person name="Dale J.M."/>
            <person name="Chen H."/>
            <person name="Shinn P."/>
            <person name="Palm C.J."/>
            <person name="Southwick A.M."/>
            <person name="Wu H.C."/>
            <person name="Kim C.J."/>
            <person name="Nguyen M."/>
            <person name="Pham P.K."/>
            <person name="Cheuk R.F."/>
            <person name="Karlin-Newmann G."/>
            <person name="Liu S.X."/>
            <person name="Lam B."/>
            <person name="Sakano H."/>
            <person name="Wu T."/>
            <person name="Yu G."/>
            <person name="Miranda M."/>
            <person name="Quach H.L."/>
            <person name="Tripp M."/>
            <person name="Chang C.H."/>
            <person name="Lee J.M."/>
            <person name="Toriumi M.J."/>
            <person name="Chan M.M."/>
            <person name="Tang C.C."/>
            <person name="Onodera C.S."/>
            <person name="Deng J.M."/>
            <person name="Akiyama K."/>
            <person name="Ansari Y."/>
            <person name="Arakawa T."/>
            <person name="Banh J."/>
            <person name="Banno F."/>
            <person name="Bowser L."/>
            <person name="Brooks S.Y."/>
            <person name="Carninci P."/>
            <person name="Chao Q."/>
            <person name="Choy N."/>
            <person name="Enju A."/>
            <person name="Goldsmith A.D."/>
            <person name="Gurjal M."/>
            <person name="Hansen N.F."/>
            <person name="Hayashizaki Y."/>
            <person name="Johnson-Hopson C."/>
            <person name="Hsuan V.W."/>
            <person name="Iida K."/>
            <person name="Karnes M."/>
            <person name="Khan S."/>
            <person name="Koesema E."/>
            <person name="Ishida J."/>
            <person name="Jiang P.X."/>
            <person name="Jones T."/>
            <person name="Kawai J."/>
            <person name="Kamiya A."/>
            <person name="Meyers C."/>
            <person name="Nakajima M."/>
            <person name="Narusaka M."/>
            <person name="Seki M."/>
            <person name="Sakurai T."/>
            <person name="Satou M."/>
            <person name="Tamse R."/>
            <person name="Vaysberg M."/>
            <person name="Wallender E.K."/>
            <person name="Wong C."/>
            <person name="Yamamura Y."/>
            <person name="Yuan S."/>
            <person name="Shinozaki K."/>
            <person name="Davis R.W."/>
            <person name="Theologis A."/>
            <person name="Ecker J.R."/>
        </authorList>
    </citation>
    <scope>NUCLEOTIDE SEQUENCE [LARGE SCALE MRNA]</scope>
    <source>
        <strain>cv. Columbia</strain>
    </source>
</reference>
<reference key="4">
    <citation type="submission" date="2006-07" db="EMBL/GenBank/DDBJ databases">
        <title>Large-scale analysis of RIKEN Arabidopsis full-length (RAFL) cDNAs.</title>
        <authorList>
            <person name="Totoki Y."/>
            <person name="Seki M."/>
            <person name="Ishida J."/>
            <person name="Nakajima M."/>
            <person name="Enju A."/>
            <person name="Kamiya A."/>
            <person name="Narusaka M."/>
            <person name="Shin-i T."/>
            <person name="Nakagawa M."/>
            <person name="Sakamoto N."/>
            <person name="Oishi K."/>
            <person name="Kohara Y."/>
            <person name="Kobayashi M."/>
            <person name="Toyoda A."/>
            <person name="Sakaki Y."/>
            <person name="Sakurai T."/>
            <person name="Iida K."/>
            <person name="Akiyama K."/>
            <person name="Satou M."/>
            <person name="Toyoda T."/>
            <person name="Konagaya A."/>
            <person name="Carninci P."/>
            <person name="Kawai J."/>
            <person name="Hayashizaki Y."/>
            <person name="Shinozaki K."/>
        </authorList>
    </citation>
    <scope>NUCLEOTIDE SEQUENCE [LARGE SCALE MRNA] OF 242-407</scope>
    <source>
        <strain>cv. Columbia</strain>
    </source>
</reference>
<reference key="5">
    <citation type="journal article" date="2006" name="Plant Physiol.">
        <title>Redox regulation of a novel plastid-targeted beta-amylase of Arabidopsis.</title>
        <authorList>
            <person name="Sparla F."/>
            <person name="Costa A."/>
            <person name="Lo Schiavo F."/>
            <person name="Pupillo P."/>
            <person name="Trost P."/>
        </authorList>
    </citation>
    <scope>SUBCELLULAR LOCATION</scope>
    <scope>TISSUE SPECIFICITY</scope>
    <scope>BIOPHYSICOCHEMICAL PROPERTIES</scope>
    <scope>ACTIVITY REGULATION</scope>
    <scope>DISULFIDE BOND</scope>
    <scope>TRANSIT PEPTIDE CLEAVAGE SITE</scope>
    <scope>MUTAGENESIS OF CYS-73; CYS-189; CYS-247; CYS-302; CYS-440; CYS-454; CYS-511 AND CYS-547</scope>
</reference>
<reference key="6">
    <citation type="journal article" date="2007" name="Plant Physiol.">
        <title>Glucan, water dikinase activity stimulates breakdown of starch granules by plastidial beta-amylases.</title>
        <authorList>
            <person name="Edner C."/>
            <person name="Li J."/>
            <person name="Albrecht T."/>
            <person name="Mahlow S."/>
            <person name="Hejazi M."/>
            <person name="Hussain H."/>
            <person name="Kaplan F."/>
            <person name="Guy C."/>
            <person name="Smith S.M."/>
            <person name="Steup M."/>
            <person name="Ritte G."/>
        </authorList>
    </citation>
    <scope>FUNCTION</scope>
</reference>
<reference key="7">
    <citation type="journal article" date="2008" name="J. Proteome Res.">
        <title>Site-specific phosphorylation profiling of Arabidopsis proteins by mass spectrometry and peptide chip analysis.</title>
        <authorList>
            <person name="de la Fuente van Bentem S."/>
            <person name="Anrather D."/>
            <person name="Dohnal I."/>
            <person name="Roitinger E."/>
            <person name="Csaszar E."/>
            <person name="Joore J."/>
            <person name="Buijnink J."/>
            <person name="Carreri A."/>
            <person name="Forzani C."/>
            <person name="Lorkovic Z.J."/>
            <person name="Barta A."/>
            <person name="Lecourieux D."/>
            <person name="Verhounig A."/>
            <person name="Jonak C."/>
            <person name="Hirt H."/>
        </authorList>
    </citation>
    <scope>PHOSPHORYLATION [LARGE SCALE ANALYSIS] AT SER-55 AND SER-59</scope>
    <scope>IDENTIFICATION BY MASS SPECTROMETRY [LARGE SCALE ANALYSIS]</scope>
    <source>
        <tissue>Root</tissue>
    </source>
</reference>
<reference key="8">
    <citation type="journal article" date="2008" name="Plant Cell">
        <title>Beta-AMYLASE4, a noncatalytic protein required for starch breakdown, acts upstream of three active beta-amylases in Arabidopsis chloroplasts.</title>
        <authorList>
            <person name="Fulton D.C."/>
            <person name="Stettler M."/>
            <person name="Mettler T."/>
            <person name="Vaughan C.K."/>
            <person name="Li J."/>
            <person name="Francisco P."/>
            <person name="Gil M."/>
            <person name="Reinhold H."/>
            <person name="Eicke S."/>
            <person name="Messerli G."/>
            <person name="Dorken G."/>
            <person name="Halliday K."/>
            <person name="Smith A.M."/>
            <person name="Smith S.M."/>
            <person name="Zeeman S.C."/>
        </authorList>
    </citation>
    <scope>FUNCTION</scope>
    <scope>SUBCELLULAR LOCATION</scope>
    <scope>BIOPHYSICOCHEMICAL PROPERTIES</scope>
    <scope>DISRUPTION PHENOTYPE</scope>
    <scope>GENE FAMILY</scope>
    <scope>NOMENCLATURE</scope>
</reference>
<reference key="9">
    <citation type="journal article" date="2009" name="Arch. Biochem. Biophys.">
        <title>Catalytically-inactive beta-amylase BAM4 required for starch breakdown in Arabidopsis leaves is a starch-binding-protein.</title>
        <authorList>
            <person name="Li J."/>
            <person name="Francisco P."/>
            <person name="Zhou W."/>
            <person name="Edner C."/>
            <person name="Steup M."/>
            <person name="Ritte G."/>
            <person name="Bond C.S."/>
            <person name="Smith S.M."/>
        </authorList>
    </citation>
    <scope>FUNCTION</scope>
    <scope>BIOPHYSICOCHEMICAL PROPERTIES</scope>
</reference>
<reference key="10">
    <citation type="journal article" date="2009" name="J. Proteomics">
        <title>Phosphoproteomic analysis of nuclei-enriched fractions from Arabidopsis thaliana.</title>
        <authorList>
            <person name="Jones A.M.E."/>
            <person name="MacLean D."/>
            <person name="Studholme D.J."/>
            <person name="Serna-Sanz A."/>
            <person name="Andreasson E."/>
            <person name="Rathjen J.P."/>
            <person name="Peck S.C."/>
        </authorList>
    </citation>
    <scope>IDENTIFICATION BY MASS SPECTROMETRY [LARGE SCALE ANALYSIS]</scope>
    <source>
        <strain>cv. Columbia</strain>
    </source>
</reference>
<reference key="11">
    <citation type="journal article" date="2009" name="Plant Physiol.">
        <title>Large-scale Arabidopsis phosphoproteome profiling reveals novel chloroplast kinase substrates and phosphorylation networks.</title>
        <authorList>
            <person name="Reiland S."/>
            <person name="Messerli G."/>
            <person name="Baerenfaller K."/>
            <person name="Gerrits B."/>
            <person name="Endler A."/>
            <person name="Grossmann J."/>
            <person name="Gruissem W."/>
            <person name="Baginsky S."/>
        </authorList>
    </citation>
    <scope>IDENTIFICATION BY MASS SPECTROMETRY [LARGE SCALE ANALYSIS]</scope>
</reference>